<sequence>MAAADPFLHLARPLGPVAVGSAPTTAPLNVVIQPQALFSILDHSLRRNADQERVIGTLLGTRSEDGTEVEIRSTFAVGHTETTDQVEVDMEYQKQMLALHLKANPKEVLVGWYATSSELNTFSALIQNFYSGQGDGTFPHPAVHLTVSTEPGKDIETRAYISAPVGVTAERAADSAAFIPVPHEIRYGETEKSGLEAIAAARDAEERAANLFTDIEALERAIEEVLGMIDRVSRYVESVIDEEAPASTALGQFLLNALALAPKVEPADIERDFNNHIQDVLVVSYLANTIRTQMELSNRLATAQLTLGGESGSTESGQRGGQRGGKGGRGGQQRNQERSGEEVRA</sequence>
<reference key="1">
    <citation type="submission" date="2005-09" db="EMBL/GenBank/DDBJ databases">
        <title>Annotation of the Aspergillus terreus NIH2624 genome.</title>
        <authorList>
            <person name="Birren B.W."/>
            <person name="Lander E.S."/>
            <person name="Galagan J.E."/>
            <person name="Nusbaum C."/>
            <person name="Devon K."/>
            <person name="Henn M."/>
            <person name="Ma L.-J."/>
            <person name="Jaffe D.B."/>
            <person name="Butler J."/>
            <person name="Alvarez P."/>
            <person name="Gnerre S."/>
            <person name="Grabherr M."/>
            <person name="Kleber M."/>
            <person name="Mauceli E.W."/>
            <person name="Brockman W."/>
            <person name="Rounsley S."/>
            <person name="Young S.K."/>
            <person name="LaButti K."/>
            <person name="Pushparaj V."/>
            <person name="DeCaprio D."/>
            <person name="Crawford M."/>
            <person name="Koehrsen M."/>
            <person name="Engels R."/>
            <person name="Montgomery P."/>
            <person name="Pearson M."/>
            <person name="Howarth C."/>
            <person name="Larson L."/>
            <person name="Luoma S."/>
            <person name="White J."/>
            <person name="Alvarado L."/>
            <person name="Kodira C.D."/>
            <person name="Zeng Q."/>
            <person name="Oleary S."/>
            <person name="Yandava C."/>
            <person name="Denning D.W."/>
            <person name="Nierman W.C."/>
            <person name="Milne T."/>
            <person name="Madden K."/>
        </authorList>
    </citation>
    <scope>NUCLEOTIDE SEQUENCE [LARGE SCALE GENOMIC DNA]</scope>
    <source>
        <strain>NIH 2624 / FGSC A1156</strain>
    </source>
</reference>
<name>EIF3F_ASPTN</name>
<accession>Q0CCM5</accession>
<gene>
    <name type="ORF">ATEG_08559</name>
</gene>
<dbReference type="EMBL" id="CH476606">
    <property type="protein sequence ID" value="EAU30691.1"/>
    <property type="molecule type" value="Genomic_DNA"/>
</dbReference>
<dbReference type="RefSeq" id="XP_001217145.1">
    <property type="nucleotide sequence ID" value="XM_001217144.1"/>
</dbReference>
<dbReference type="SMR" id="Q0CCM5"/>
<dbReference type="STRING" id="341663.Q0CCM5"/>
<dbReference type="EnsemblFungi" id="EAU30691">
    <property type="protein sequence ID" value="EAU30691"/>
    <property type="gene ID" value="ATEG_08559"/>
</dbReference>
<dbReference type="GeneID" id="4323278"/>
<dbReference type="VEuPathDB" id="FungiDB:ATEG_08559"/>
<dbReference type="eggNOG" id="KOG2975">
    <property type="taxonomic scope" value="Eukaryota"/>
</dbReference>
<dbReference type="HOGENOM" id="CLU_027018_0_0_1"/>
<dbReference type="OMA" id="EYFVHFH"/>
<dbReference type="OrthoDB" id="25498at2759"/>
<dbReference type="Proteomes" id="UP000007963">
    <property type="component" value="Unassembled WGS sequence"/>
</dbReference>
<dbReference type="GO" id="GO:0016282">
    <property type="term" value="C:eukaryotic 43S preinitiation complex"/>
    <property type="evidence" value="ECO:0007669"/>
    <property type="project" value="UniProtKB-UniRule"/>
</dbReference>
<dbReference type="GO" id="GO:0033290">
    <property type="term" value="C:eukaryotic 48S preinitiation complex"/>
    <property type="evidence" value="ECO:0007669"/>
    <property type="project" value="UniProtKB-UniRule"/>
</dbReference>
<dbReference type="GO" id="GO:0071540">
    <property type="term" value="C:eukaryotic translation initiation factor 3 complex, eIF3e"/>
    <property type="evidence" value="ECO:0007669"/>
    <property type="project" value="EnsemblFungi"/>
</dbReference>
<dbReference type="GO" id="GO:0071541">
    <property type="term" value="C:eukaryotic translation initiation factor 3 complex, eIF3m"/>
    <property type="evidence" value="ECO:0007669"/>
    <property type="project" value="EnsemblFungi"/>
</dbReference>
<dbReference type="GO" id="GO:0008237">
    <property type="term" value="F:metallopeptidase activity"/>
    <property type="evidence" value="ECO:0007669"/>
    <property type="project" value="InterPro"/>
</dbReference>
<dbReference type="GO" id="GO:0003743">
    <property type="term" value="F:translation initiation factor activity"/>
    <property type="evidence" value="ECO:0007669"/>
    <property type="project" value="UniProtKB-UniRule"/>
</dbReference>
<dbReference type="GO" id="GO:0031369">
    <property type="term" value="F:translation initiation factor binding"/>
    <property type="evidence" value="ECO:0007669"/>
    <property type="project" value="InterPro"/>
</dbReference>
<dbReference type="GO" id="GO:0001732">
    <property type="term" value="P:formation of cytoplasmic translation initiation complex"/>
    <property type="evidence" value="ECO:0007669"/>
    <property type="project" value="UniProtKB-UniRule"/>
</dbReference>
<dbReference type="CDD" id="cd08064">
    <property type="entry name" value="MPN_eIF3f"/>
    <property type="match status" value="1"/>
</dbReference>
<dbReference type="FunFam" id="3.40.140.10:FF:000019">
    <property type="entry name" value="Eukaryotic translation initiation factor 3 subunit F"/>
    <property type="match status" value="1"/>
</dbReference>
<dbReference type="Gene3D" id="3.40.140.10">
    <property type="entry name" value="Cytidine Deaminase, domain 2"/>
    <property type="match status" value="1"/>
</dbReference>
<dbReference type="HAMAP" id="MF_03005">
    <property type="entry name" value="eIF3f"/>
    <property type="match status" value="1"/>
</dbReference>
<dbReference type="InterPro" id="IPR027531">
    <property type="entry name" value="eIF3f"/>
</dbReference>
<dbReference type="InterPro" id="IPR024969">
    <property type="entry name" value="EIF3F/CSN6-like_C"/>
</dbReference>
<dbReference type="InterPro" id="IPR000555">
    <property type="entry name" value="JAMM/MPN+_dom"/>
</dbReference>
<dbReference type="InterPro" id="IPR037518">
    <property type="entry name" value="MPN"/>
</dbReference>
<dbReference type="PANTHER" id="PTHR10540:SF6">
    <property type="entry name" value="EUKARYOTIC TRANSLATION INITIATION FACTOR 3 SUBUNIT F"/>
    <property type="match status" value="1"/>
</dbReference>
<dbReference type="PANTHER" id="PTHR10540">
    <property type="entry name" value="EUKARYOTIC TRANSLATION INITIATION FACTOR 3 SUBUNIT F-RELATED"/>
    <property type="match status" value="1"/>
</dbReference>
<dbReference type="Pfam" id="PF01398">
    <property type="entry name" value="JAB"/>
    <property type="match status" value="1"/>
</dbReference>
<dbReference type="Pfam" id="PF13012">
    <property type="entry name" value="MitMem_reg"/>
    <property type="match status" value="1"/>
</dbReference>
<dbReference type="SMART" id="SM00232">
    <property type="entry name" value="JAB_MPN"/>
    <property type="match status" value="1"/>
</dbReference>
<dbReference type="PROSITE" id="PS50249">
    <property type="entry name" value="MPN"/>
    <property type="match status" value="1"/>
</dbReference>
<comment type="function">
    <text evidence="1">Component of the eukaryotic translation initiation factor 3 (eIF-3) complex, which is involved in protein synthesis of a specialized repertoire of mRNAs and, together with other initiation factors, stimulates binding of mRNA and methionyl-tRNAi to the 40S ribosome. The eIF-3 complex specifically targets and initiates translation of a subset of mRNAs involved in cell proliferation.</text>
</comment>
<comment type="subunit">
    <text evidence="1">Component of the eukaryotic translation initiation factor 3 (eIF-3) complex.</text>
</comment>
<comment type="subcellular location">
    <subcellularLocation>
        <location evidence="1">Cytoplasm</location>
    </subcellularLocation>
</comment>
<comment type="similarity">
    <text evidence="1">Belongs to the eIF-3 subunit F family.</text>
</comment>
<feature type="chain" id="PRO_0000364326" description="Eukaryotic translation initiation factor 3 subunit F">
    <location>
        <begin position="1"/>
        <end position="345"/>
    </location>
</feature>
<feature type="domain" description="MPN" evidence="2">
    <location>
        <begin position="30"/>
        <end position="166"/>
    </location>
</feature>
<feature type="region of interest" description="Disordered" evidence="3">
    <location>
        <begin position="308"/>
        <end position="345"/>
    </location>
</feature>
<feature type="compositionally biased region" description="Gly residues" evidence="3">
    <location>
        <begin position="318"/>
        <end position="331"/>
    </location>
</feature>
<feature type="compositionally biased region" description="Basic and acidic residues" evidence="3">
    <location>
        <begin position="335"/>
        <end position="345"/>
    </location>
</feature>
<keyword id="KW-0963">Cytoplasm</keyword>
<keyword id="KW-0396">Initiation factor</keyword>
<keyword id="KW-0648">Protein biosynthesis</keyword>
<keyword id="KW-1185">Reference proteome</keyword>
<proteinExistence type="inferred from homology"/>
<protein>
    <recommendedName>
        <fullName evidence="1">Eukaryotic translation initiation factor 3 subunit F</fullName>
        <shortName evidence="1">eIF3f</shortName>
    </recommendedName>
</protein>
<evidence type="ECO:0000255" key="1">
    <source>
        <dbReference type="HAMAP-Rule" id="MF_03005"/>
    </source>
</evidence>
<evidence type="ECO:0000255" key="2">
    <source>
        <dbReference type="PROSITE-ProRule" id="PRU01182"/>
    </source>
</evidence>
<evidence type="ECO:0000256" key="3">
    <source>
        <dbReference type="SAM" id="MobiDB-lite"/>
    </source>
</evidence>
<organism>
    <name type="scientific">Aspergillus terreus (strain NIH 2624 / FGSC A1156)</name>
    <dbReference type="NCBI Taxonomy" id="341663"/>
    <lineage>
        <taxon>Eukaryota</taxon>
        <taxon>Fungi</taxon>
        <taxon>Dikarya</taxon>
        <taxon>Ascomycota</taxon>
        <taxon>Pezizomycotina</taxon>
        <taxon>Eurotiomycetes</taxon>
        <taxon>Eurotiomycetidae</taxon>
        <taxon>Eurotiales</taxon>
        <taxon>Aspergillaceae</taxon>
        <taxon>Aspergillus</taxon>
        <taxon>Aspergillus subgen. Circumdati</taxon>
    </lineage>
</organism>